<name>GP41_BPSP1</name>
<gene>
    <name type="primary">41</name>
</gene>
<organism>
    <name type="scientific">Bacillus phage SP01</name>
    <name type="common">Bacteriophage SP01</name>
    <dbReference type="NCBI Taxonomy" id="2884427"/>
    <lineage>
        <taxon>Viruses</taxon>
        <taxon>Duplodnaviria</taxon>
        <taxon>Heunggongvirae</taxon>
        <taxon>Uroviricota</taxon>
        <taxon>Caudoviricetes</taxon>
        <taxon>Herelleviridae</taxon>
        <taxon>Spounavirinae</taxon>
        <taxon>Okubovirus</taxon>
        <taxon>Okubovirus SPO1</taxon>
    </lineage>
</organism>
<accession>O48397</accession>
<protein>
    <recommendedName>
        <fullName>Putative gene 41 protein</fullName>
    </recommendedName>
</protein>
<proteinExistence type="predicted"/>
<sequence>MEKLPNTVVKVHGEGMESKLFPRKLHKDTNSILREDLVSACQEHIEALVEGMIAHGDGRKVAELDTSTQYYWHLKLVEYTPIPGRTQHYVDLVDGTNPDVCYFSLCDCSGDNITDRRWSNMVKRLQNPEEDIAKTLRCYFRQDAGMPSWIEYPQ</sequence>
<dbReference type="EMBL" id="AF031901">
    <property type="protein sequence ID" value="AAC29010.1"/>
    <property type="molecule type" value="Genomic_DNA"/>
</dbReference>
<dbReference type="RefSeq" id="YP_002300285.1">
    <property type="nucleotide sequence ID" value="NC_011421.1"/>
</dbReference>
<dbReference type="GeneID" id="7008998"/>
<dbReference type="KEGG" id="vg:7008998"/>
<feature type="chain" id="PRO_0000106147" description="Putative gene 41 protein">
    <location>
        <begin position="1"/>
        <end position="154"/>
    </location>
</feature>
<reference key="1">
    <citation type="journal article" date="1998" name="Virology">
        <title>Genes and regulatory sites of the 'host-takeover module' in the terminal redundancy of Bacillus subtilis bacteriophage SPO1.</title>
        <authorList>
            <person name="Stewart C.R."/>
            <person name="Gaslightwala I."/>
            <person name="Hinata K."/>
            <person name="Krolikowski K.A."/>
            <person name="Needleman D.S."/>
            <person name="Peng A.S.-Y."/>
            <person name="Peterman M.A."/>
            <person name="Tobias A."/>
            <person name="Wei P."/>
        </authorList>
    </citation>
    <scope>NUCLEOTIDE SEQUENCE [GENOMIC DNA]</scope>
</reference>
<organismHost>
    <name type="scientific">Bacillus subtilis</name>
    <dbReference type="NCBI Taxonomy" id="1423"/>
</organismHost>